<dbReference type="EMBL" id="AE002160">
    <property type="protein sequence ID" value="AAF39095.1"/>
    <property type="molecule type" value="Genomic_DNA"/>
</dbReference>
<dbReference type="PIR" id="E81727">
    <property type="entry name" value="E81727"/>
</dbReference>
<dbReference type="RefSeq" id="WP_010229859.1">
    <property type="nucleotide sequence ID" value="NZ_CP063055.1"/>
</dbReference>
<dbReference type="SMR" id="Q9PL84"/>
<dbReference type="GeneID" id="1246391"/>
<dbReference type="KEGG" id="cmu:TC_0223"/>
<dbReference type="eggNOG" id="COG0292">
    <property type="taxonomic scope" value="Bacteria"/>
</dbReference>
<dbReference type="HOGENOM" id="CLU_123265_0_1_0"/>
<dbReference type="OrthoDB" id="9808966at2"/>
<dbReference type="Proteomes" id="UP000000800">
    <property type="component" value="Chromosome"/>
</dbReference>
<dbReference type="GO" id="GO:1990904">
    <property type="term" value="C:ribonucleoprotein complex"/>
    <property type="evidence" value="ECO:0007669"/>
    <property type="project" value="UniProtKB-KW"/>
</dbReference>
<dbReference type="GO" id="GO:0005840">
    <property type="term" value="C:ribosome"/>
    <property type="evidence" value="ECO:0007669"/>
    <property type="project" value="UniProtKB-KW"/>
</dbReference>
<dbReference type="GO" id="GO:0019843">
    <property type="term" value="F:rRNA binding"/>
    <property type="evidence" value="ECO:0007669"/>
    <property type="project" value="UniProtKB-UniRule"/>
</dbReference>
<dbReference type="GO" id="GO:0003735">
    <property type="term" value="F:structural constituent of ribosome"/>
    <property type="evidence" value="ECO:0007669"/>
    <property type="project" value="InterPro"/>
</dbReference>
<dbReference type="GO" id="GO:0000027">
    <property type="term" value="P:ribosomal large subunit assembly"/>
    <property type="evidence" value="ECO:0007669"/>
    <property type="project" value="UniProtKB-UniRule"/>
</dbReference>
<dbReference type="GO" id="GO:0006412">
    <property type="term" value="P:translation"/>
    <property type="evidence" value="ECO:0007669"/>
    <property type="project" value="InterPro"/>
</dbReference>
<dbReference type="CDD" id="cd07026">
    <property type="entry name" value="Ribosomal_L20"/>
    <property type="match status" value="1"/>
</dbReference>
<dbReference type="FunFam" id="1.10.1900.20:FF:000001">
    <property type="entry name" value="50S ribosomal protein L20"/>
    <property type="match status" value="1"/>
</dbReference>
<dbReference type="Gene3D" id="6.10.160.10">
    <property type="match status" value="1"/>
</dbReference>
<dbReference type="Gene3D" id="1.10.1900.20">
    <property type="entry name" value="Ribosomal protein L20"/>
    <property type="match status" value="1"/>
</dbReference>
<dbReference type="HAMAP" id="MF_00382">
    <property type="entry name" value="Ribosomal_bL20"/>
    <property type="match status" value="1"/>
</dbReference>
<dbReference type="InterPro" id="IPR005813">
    <property type="entry name" value="Ribosomal_bL20"/>
</dbReference>
<dbReference type="InterPro" id="IPR049946">
    <property type="entry name" value="RIBOSOMAL_L20_CS"/>
</dbReference>
<dbReference type="InterPro" id="IPR035566">
    <property type="entry name" value="Ribosomal_protein_bL20_C"/>
</dbReference>
<dbReference type="NCBIfam" id="TIGR01032">
    <property type="entry name" value="rplT_bact"/>
    <property type="match status" value="1"/>
</dbReference>
<dbReference type="PANTHER" id="PTHR10986">
    <property type="entry name" value="39S RIBOSOMAL PROTEIN L20"/>
    <property type="match status" value="1"/>
</dbReference>
<dbReference type="Pfam" id="PF00453">
    <property type="entry name" value="Ribosomal_L20"/>
    <property type="match status" value="1"/>
</dbReference>
<dbReference type="PRINTS" id="PR00062">
    <property type="entry name" value="RIBOSOMALL20"/>
</dbReference>
<dbReference type="SUPFAM" id="SSF74731">
    <property type="entry name" value="Ribosomal protein L20"/>
    <property type="match status" value="1"/>
</dbReference>
<dbReference type="PROSITE" id="PS00937">
    <property type="entry name" value="RIBOSOMAL_L20"/>
    <property type="match status" value="1"/>
</dbReference>
<organism>
    <name type="scientific">Chlamydia muridarum (strain MoPn / Nigg)</name>
    <dbReference type="NCBI Taxonomy" id="243161"/>
    <lineage>
        <taxon>Bacteria</taxon>
        <taxon>Pseudomonadati</taxon>
        <taxon>Chlamydiota</taxon>
        <taxon>Chlamydiia</taxon>
        <taxon>Chlamydiales</taxon>
        <taxon>Chlamydiaceae</taxon>
        <taxon>Chlamydia/Chlamydophila group</taxon>
        <taxon>Chlamydia</taxon>
    </lineage>
</organism>
<comment type="function">
    <text evidence="1">Binds directly to 23S ribosomal RNA and is necessary for the in vitro assembly process of the 50S ribosomal subunit. It is not involved in the protein synthesizing functions of that subunit (By similarity).</text>
</comment>
<comment type="similarity">
    <text evidence="2">Belongs to the bacterial ribosomal protein bL20 family.</text>
</comment>
<gene>
    <name type="primary">rplT</name>
    <name type="ordered locus">TC_0223</name>
</gene>
<evidence type="ECO:0000250" key="1"/>
<evidence type="ECO:0000305" key="2"/>
<proteinExistence type="inferred from homology"/>
<feature type="chain" id="PRO_0000177141" description="Large ribosomal subunit protein bL20">
    <location>
        <begin position="1"/>
        <end position="123"/>
    </location>
</feature>
<reference key="1">
    <citation type="journal article" date="2000" name="Nucleic Acids Res.">
        <title>Genome sequences of Chlamydia trachomatis MoPn and Chlamydia pneumoniae AR39.</title>
        <authorList>
            <person name="Read T.D."/>
            <person name="Brunham R.C."/>
            <person name="Shen C."/>
            <person name="Gill S.R."/>
            <person name="Heidelberg J.F."/>
            <person name="White O."/>
            <person name="Hickey E.K."/>
            <person name="Peterson J.D."/>
            <person name="Utterback T.R."/>
            <person name="Berry K.J."/>
            <person name="Bass S."/>
            <person name="Linher K.D."/>
            <person name="Weidman J.F."/>
            <person name="Khouri H.M."/>
            <person name="Craven B."/>
            <person name="Bowman C."/>
            <person name="Dodson R.J."/>
            <person name="Gwinn M.L."/>
            <person name="Nelson W.C."/>
            <person name="DeBoy R.T."/>
            <person name="Kolonay J.F."/>
            <person name="McClarty G."/>
            <person name="Salzberg S.L."/>
            <person name="Eisen J.A."/>
            <person name="Fraser C.M."/>
        </authorList>
    </citation>
    <scope>NUCLEOTIDE SEQUENCE [LARGE SCALE GENOMIC DNA]</scope>
    <source>
        <strain>MoPn / Nigg</strain>
    </source>
</reference>
<accession>Q9PL84</accession>
<keyword id="KW-0687">Ribonucleoprotein</keyword>
<keyword id="KW-0689">Ribosomal protein</keyword>
<keyword id="KW-0694">RNA-binding</keyword>
<keyword id="KW-0699">rRNA-binding</keyword>
<name>RL20_CHLMU</name>
<sequence>MVRATGSVASRARRKRILKQAKGFWGDRKGHFRQSRSSVMRAMAFNYMHRKDRKGDFRSLWISRLNVASRIHGLSYSRLINGLKQAGINLNRKMLSEMAIHDPQGFALVAAQAKLALEASIQG</sequence>
<protein>
    <recommendedName>
        <fullName evidence="2">Large ribosomal subunit protein bL20</fullName>
    </recommendedName>
    <alternativeName>
        <fullName>50S ribosomal protein L20</fullName>
    </alternativeName>
</protein>